<gene>
    <name evidence="1" type="primary">rlmN</name>
    <name type="ordered locus">FTA_1085</name>
</gene>
<name>RLMN_FRATF</name>
<feature type="chain" id="PRO_0000350180" description="Dual-specificity RNA methyltransferase RlmN">
    <location>
        <begin position="1"/>
        <end position="370"/>
    </location>
</feature>
<feature type="domain" description="Radical SAM core" evidence="2">
    <location>
        <begin position="99"/>
        <end position="337"/>
    </location>
</feature>
<feature type="active site" description="Proton acceptor" evidence="1">
    <location>
        <position position="93"/>
    </location>
</feature>
<feature type="active site" description="S-methylcysteine intermediate" evidence="1">
    <location>
        <position position="343"/>
    </location>
</feature>
<feature type="binding site" evidence="1">
    <location>
        <position position="113"/>
    </location>
    <ligand>
        <name>[4Fe-4S] cluster</name>
        <dbReference type="ChEBI" id="CHEBI:49883"/>
        <note>4Fe-4S-S-AdoMet</note>
    </ligand>
</feature>
<feature type="binding site" evidence="1">
    <location>
        <position position="117"/>
    </location>
    <ligand>
        <name>[4Fe-4S] cluster</name>
        <dbReference type="ChEBI" id="CHEBI:49883"/>
        <note>4Fe-4S-S-AdoMet</note>
    </ligand>
</feature>
<feature type="binding site" evidence="1">
    <location>
        <position position="120"/>
    </location>
    <ligand>
        <name>[4Fe-4S] cluster</name>
        <dbReference type="ChEBI" id="CHEBI:49883"/>
        <note>4Fe-4S-S-AdoMet</note>
    </ligand>
</feature>
<feature type="binding site" evidence="1">
    <location>
        <begin position="167"/>
        <end position="168"/>
    </location>
    <ligand>
        <name>S-adenosyl-L-methionine</name>
        <dbReference type="ChEBI" id="CHEBI:59789"/>
    </ligand>
</feature>
<feature type="binding site" evidence="1">
    <location>
        <position position="199"/>
    </location>
    <ligand>
        <name>S-adenosyl-L-methionine</name>
        <dbReference type="ChEBI" id="CHEBI:59789"/>
    </ligand>
</feature>
<feature type="binding site" evidence="1">
    <location>
        <begin position="221"/>
        <end position="223"/>
    </location>
    <ligand>
        <name>S-adenosyl-L-methionine</name>
        <dbReference type="ChEBI" id="CHEBI:59789"/>
    </ligand>
</feature>
<feature type="binding site" evidence="1">
    <location>
        <position position="300"/>
    </location>
    <ligand>
        <name>S-adenosyl-L-methionine</name>
        <dbReference type="ChEBI" id="CHEBI:59789"/>
    </ligand>
</feature>
<feature type="disulfide bond" description="(transient)" evidence="1">
    <location>
        <begin position="106"/>
        <end position="343"/>
    </location>
</feature>
<dbReference type="EC" id="2.1.1.192" evidence="1"/>
<dbReference type="EMBL" id="CP000803">
    <property type="protein sequence ID" value="ABU61561.1"/>
    <property type="molecule type" value="Genomic_DNA"/>
</dbReference>
<dbReference type="RefSeq" id="WP_012118992.1">
    <property type="nucleotide sequence ID" value="NC_009749.1"/>
</dbReference>
<dbReference type="SMR" id="A7NC58"/>
<dbReference type="KEGG" id="fta:FTA_1085"/>
<dbReference type="HOGENOM" id="CLU_029101_0_0_6"/>
<dbReference type="GO" id="GO:0005737">
    <property type="term" value="C:cytoplasm"/>
    <property type="evidence" value="ECO:0007669"/>
    <property type="project" value="UniProtKB-SubCell"/>
</dbReference>
<dbReference type="GO" id="GO:0051539">
    <property type="term" value="F:4 iron, 4 sulfur cluster binding"/>
    <property type="evidence" value="ECO:0007669"/>
    <property type="project" value="UniProtKB-UniRule"/>
</dbReference>
<dbReference type="GO" id="GO:0046872">
    <property type="term" value="F:metal ion binding"/>
    <property type="evidence" value="ECO:0007669"/>
    <property type="project" value="UniProtKB-KW"/>
</dbReference>
<dbReference type="GO" id="GO:0070040">
    <property type="term" value="F:rRNA (adenine(2503)-C2-)-methyltransferase activity"/>
    <property type="evidence" value="ECO:0007669"/>
    <property type="project" value="UniProtKB-UniRule"/>
</dbReference>
<dbReference type="GO" id="GO:0019843">
    <property type="term" value="F:rRNA binding"/>
    <property type="evidence" value="ECO:0007669"/>
    <property type="project" value="UniProtKB-UniRule"/>
</dbReference>
<dbReference type="GO" id="GO:0002935">
    <property type="term" value="F:tRNA (adenine(37)-C2)-methyltransferase activity"/>
    <property type="evidence" value="ECO:0007669"/>
    <property type="project" value="UniProtKB-UniRule"/>
</dbReference>
<dbReference type="GO" id="GO:0000049">
    <property type="term" value="F:tRNA binding"/>
    <property type="evidence" value="ECO:0007669"/>
    <property type="project" value="UniProtKB-UniRule"/>
</dbReference>
<dbReference type="GO" id="GO:0070475">
    <property type="term" value="P:rRNA base methylation"/>
    <property type="evidence" value="ECO:0007669"/>
    <property type="project" value="UniProtKB-UniRule"/>
</dbReference>
<dbReference type="GO" id="GO:0030488">
    <property type="term" value="P:tRNA methylation"/>
    <property type="evidence" value="ECO:0007669"/>
    <property type="project" value="UniProtKB-UniRule"/>
</dbReference>
<dbReference type="CDD" id="cd01335">
    <property type="entry name" value="Radical_SAM"/>
    <property type="match status" value="1"/>
</dbReference>
<dbReference type="FunFam" id="1.10.150.530:FF:000003">
    <property type="entry name" value="Dual-specificity RNA methyltransferase RlmN"/>
    <property type="match status" value="1"/>
</dbReference>
<dbReference type="FunFam" id="3.20.20.70:FF:000008">
    <property type="entry name" value="Dual-specificity RNA methyltransferase RlmN"/>
    <property type="match status" value="1"/>
</dbReference>
<dbReference type="Gene3D" id="1.10.150.530">
    <property type="match status" value="1"/>
</dbReference>
<dbReference type="Gene3D" id="3.20.20.70">
    <property type="entry name" value="Aldolase class I"/>
    <property type="match status" value="1"/>
</dbReference>
<dbReference type="HAMAP" id="MF_01849">
    <property type="entry name" value="RNA_methyltr_RlmN"/>
    <property type="match status" value="1"/>
</dbReference>
<dbReference type="InterPro" id="IPR013785">
    <property type="entry name" value="Aldolase_TIM"/>
</dbReference>
<dbReference type="InterPro" id="IPR006638">
    <property type="entry name" value="Elp3/MiaA/NifB-like_rSAM"/>
</dbReference>
<dbReference type="InterPro" id="IPR040072">
    <property type="entry name" value="Methyltransferase_A"/>
</dbReference>
<dbReference type="InterPro" id="IPR048641">
    <property type="entry name" value="RlmN_N"/>
</dbReference>
<dbReference type="InterPro" id="IPR027492">
    <property type="entry name" value="RNA_MTrfase_RlmN"/>
</dbReference>
<dbReference type="InterPro" id="IPR004383">
    <property type="entry name" value="rRNA_lsu_MTrfase_RlmN/Cfr"/>
</dbReference>
<dbReference type="InterPro" id="IPR007197">
    <property type="entry name" value="rSAM"/>
</dbReference>
<dbReference type="NCBIfam" id="TIGR00048">
    <property type="entry name" value="rRNA_mod_RlmN"/>
    <property type="match status" value="1"/>
</dbReference>
<dbReference type="PANTHER" id="PTHR30544">
    <property type="entry name" value="23S RRNA METHYLTRANSFERASE"/>
    <property type="match status" value="1"/>
</dbReference>
<dbReference type="PANTHER" id="PTHR30544:SF5">
    <property type="entry name" value="RADICAL SAM CORE DOMAIN-CONTAINING PROTEIN"/>
    <property type="match status" value="1"/>
</dbReference>
<dbReference type="Pfam" id="PF04055">
    <property type="entry name" value="Radical_SAM"/>
    <property type="match status" value="1"/>
</dbReference>
<dbReference type="Pfam" id="PF21016">
    <property type="entry name" value="RlmN_N"/>
    <property type="match status" value="1"/>
</dbReference>
<dbReference type="PIRSF" id="PIRSF006004">
    <property type="entry name" value="CHP00048"/>
    <property type="match status" value="1"/>
</dbReference>
<dbReference type="SFLD" id="SFLDF00275">
    <property type="entry name" value="adenosine_C2_methyltransferase"/>
    <property type="match status" value="1"/>
</dbReference>
<dbReference type="SFLD" id="SFLDG01082">
    <property type="entry name" value="B12-binding_domain_containing"/>
    <property type="match status" value="1"/>
</dbReference>
<dbReference type="SFLD" id="SFLDG01062">
    <property type="entry name" value="methyltransferase_(Class_A)"/>
    <property type="match status" value="1"/>
</dbReference>
<dbReference type="SMART" id="SM00729">
    <property type="entry name" value="Elp3"/>
    <property type="match status" value="1"/>
</dbReference>
<dbReference type="SUPFAM" id="SSF102114">
    <property type="entry name" value="Radical SAM enzymes"/>
    <property type="match status" value="1"/>
</dbReference>
<dbReference type="PROSITE" id="PS51918">
    <property type="entry name" value="RADICAL_SAM"/>
    <property type="match status" value="1"/>
</dbReference>
<protein>
    <recommendedName>
        <fullName evidence="1">Dual-specificity RNA methyltransferase RlmN</fullName>
        <ecNumber evidence="1">2.1.1.192</ecNumber>
    </recommendedName>
    <alternativeName>
        <fullName evidence="1">23S rRNA (adenine(2503)-C(2))-methyltransferase</fullName>
    </alternativeName>
    <alternativeName>
        <fullName evidence="1">23S rRNA m2A2503 methyltransferase</fullName>
    </alternativeName>
    <alternativeName>
        <fullName evidence="1">Ribosomal RNA large subunit methyltransferase N</fullName>
    </alternativeName>
    <alternativeName>
        <fullName evidence="1">tRNA (adenine(37)-C(2))-methyltransferase</fullName>
    </alternativeName>
    <alternativeName>
        <fullName evidence="1">tRNA m2A37 methyltransferase</fullName>
    </alternativeName>
</protein>
<proteinExistence type="inferred from homology"/>
<evidence type="ECO:0000255" key="1">
    <source>
        <dbReference type="HAMAP-Rule" id="MF_01849"/>
    </source>
</evidence>
<evidence type="ECO:0000255" key="2">
    <source>
        <dbReference type="PROSITE-ProRule" id="PRU01266"/>
    </source>
</evidence>
<sequence>MQQDKVNLLGLNQKAIEDFFISIGKKKFHARQVFKWIHKKGVIDFDAMTDLGKNLRHKLKDKAQITIPKVVFSKASKDGTHKWLIDVGGSAVETVFIPEEGRGTLCVSSQIGCTLNCSFCSTGKQGFNRNLSAAEVIAQLWIAARTLSKTDGEHDFTVTNIVMMGMGEPLMNFENVVPAMDIMMDDLAYGLSRRKVTLSTSGVVPRIYDLLEQSGVSLAVSLHTPNDMLRNEIVPINKKYNIDELLEACKLYAQKGPHKHITFEYTLMEEVNDNLSDAEELVALLKSREVPAKINLIPFNPYPGTPYKKPSNNRIHRFKEFLQHNGFVTTVRKTRGDDIDAACGQLAGDVMDKTNRKQIYLKKLGDTNAN</sequence>
<keyword id="KW-0004">4Fe-4S</keyword>
<keyword id="KW-0963">Cytoplasm</keyword>
<keyword id="KW-1015">Disulfide bond</keyword>
<keyword id="KW-0408">Iron</keyword>
<keyword id="KW-0411">Iron-sulfur</keyword>
<keyword id="KW-0479">Metal-binding</keyword>
<keyword id="KW-0489">Methyltransferase</keyword>
<keyword id="KW-0698">rRNA processing</keyword>
<keyword id="KW-0949">S-adenosyl-L-methionine</keyword>
<keyword id="KW-0808">Transferase</keyword>
<keyword id="KW-0819">tRNA processing</keyword>
<accession>A7NC58</accession>
<organism>
    <name type="scientific">Francisella tularensis subsp. holarctica (strain FTNF002-00 / FTA)</name>
    <dbReference type="NCBI Taxonomy" id="458234"/>
    <lineage>
        <taxon>Bacteria</taxon>
        <taxon>Pseudomonadati</taxon>
        <taxon>Pseudomonadota</taxon>
        <taxon>Gammaproteobacteria</taxon>
        <taxon>Thiotrichales</taxon>
        <taxon>Francisellaceae</taxon>
        <taxon>Francisella</taxon>
    </lineage>
</organism>
<comment type="function">
    <text evidence="1">Specifically methylates position 2 of adenine 2503 in 23S rRNA and position 2 of adenine 37 in tRNAs. m2A2503 modification seems to play a crucial role in the proofreading step occurring at the peptidyl transferase center and thus would serve to optimize ribosomal fidelity.</text>
</comment>
<comment type="catalytic activity">
    <reaction evidence="1">
        <text>adenosine(2503) in 23S rRNA + 2 reduced [2Fe-2S]-[ferredoxin] + 2 S-adenosyl-L-methionine = 2-methyladenosine(2503) in 23S rRNA + 5'-deoxyadenosine + L-methionine + 2 oxidized [2Fe-2S]-[ferredoxin] + S-adenosyl-L-homocysteine</text>
        <dbReference type="Rhea" id="RHEA:42916"/>
        <dbReference type="Rhea" id="RHEA-COMP:10000"/>
        <dbReference type="Rhea" id="RHEA-COMP:10001"/>
        <dbReference type="Rhea" id="RHEA-COMP:10152"/>
        <dbReference type="Rhea" id="RHEA-COMP:10282"/>
        <dbReference type="ChEBI" id="CHEBI:17319"/>
        <dbReference type="ChEBI" id="CHEBI:33737"/>
        <dbReference type="ChEBI" id="CHEBI:33738"/>
        <dbReference type="ChEBI" id="CHEBI:57844"/>
        <dbReference type="ChEBI" id="CHEBI:57856"/>
        <dbReference type="ChEBI" id="CHEBI:59789"/>
        <dbReference type="ChEBI" id="CHEBI:74411"/>
        <dbReference type="ChEBI" id="CHEBI:74497"/>
        <dbReference type="EC" id="2.1.1.192"/>
    </reaction>
</comment>
<comment type="catalytic activity">
    <reaction evidence="1">
        <text>adenosine(37) in tRNA + 2 reduced [2Fe-2S]-[ferredoxin] + 2 S-adenosyl-L-methionine = 2-methyladenosine(37) in tRNA + 5'-deoxyadenosine + L-methionine + 2 oxidized [2Fe-2S]-[ferredoxin] + S-adenosyl-L-homocysteine</text>
        <dbReference type="Rhea" id="RHEA:43332"/>
        <dbReference type="Rhea" id="RHEA-COMP:10000"/>
        <dbReference type="Rhea" id="RHEA-COMP:10001"/>
        <dbReference type="Rhea" id="RHEA-COMP:10162"/>
        <dbReference type="Rhea" id="RHEA-COMP:10485"/>
        <dbReference type="ChEBI" id="CHEBI:17319"/>
        <dbReference type="ChEBI" id="CHEBI:33737"/>
        <dbReference type="ChEBI" id="CHEBI:33738"/>
        <dbReference type="ChEBI" id="CHEBI:57844"/>
        <dbReference type="ChEBI" id="CHEBI:57856"/>
        <dbReference type="ChEBI" id="CHEBI:59789"/>
        <dbReference type="ChEBI" id="CHEBI:74411"/>
        <dbReference type="ChEBI" id="CHEBI:74497"/>
        <dbReference type="EC" id="2.1.1.192"/>
    </reaction>
</comment>
<comment type="cofactor">
    <cofactor evidence="1">
        <name>[4Fe-4S] cluster</name>
        <dbReference type="ChEBI" id="CHEBI:49883"/>
    </cofactor>
    <text evidence="1">Binds 1 [4Fe-4S] cluster. The cluster is coordinated with 3 cysteines and an exchangeable S-adenosyl-L-methionine.</text>
</comment>
<comment type="subcellular location">
    <subcellularLocation>
        <location evidence="1">Cytoplasm</location>
    </subcellularLocation>
</comment>
<comment type="miscellaneous">
    <text evidence="1">Reaction proceeds by a ping-pong mechanism involving intermediate methylation of a conserved cysteine residue.</text>
</comment>
<comment type="similarity">
    <text evidence="1">Belongs to the radical SAM superfamily. RlmN family.</text>
</comment>
<reference key="1">
    <citation type="journal article" date="2009" name="PLoS ONE">
        <title>Complete genome sequence of Francisella tularensis subspecies holarctica FTNF002-00.</title>
        <authorList>
            <person name="Barabote R.D."/>
            <person name="Xie G."/>
            <person name="Brettin T.S."/>
            <person name="Hinrichs S.H."/>
            <person name="Fey P.D."/>
            <person name="Jay J.J."/>
            <person name="Engle J.L."/>
            <person name="Godbole S.D."/>
            <person name="Noronha J.M."/>
            <person name="Scheuermann R.H."/>
            <person name="Zhou L.W."/>
            <person name="Lion C."/>
            <person name="Dempsey M.P."/>
        </authorList>
    </citation>
    <scope>NUCLEOTIDE SEQUENCE [LARGE SCALE GENOMIC DNA]</scope>
    <source>
        <strain>FTNF002-00 / FTA</strain>
    </source>
</reference>